<protein>
    <recommendedName>
        <fullName evidence="1">GTP cyclohydrolase FolE2</fullName>
        <ecNumber evidence="1">3.5.4.16</ecNumber>
    </recommendedName>
</protein>
<proteinExistence type="inferred from homology"/>
<accession>Q6AMT5</accession>
<dbReference type="EC" id="3.5.4.16" evidence="1"/>
<dbReference type="EMBL" id="CR522870">
    <property type="protein sequence ID" value="CAG36340.1"/>
    <property type="molecule type" value="Genomic_DNA"/>
</dbReference>
<dbReference type="RefSeq" id="WP_011188852.1">
    <property type="nucleotide sequence ID" value="NC_006138.1"/>
</dbReference>
<dbReference type="SMR" id="Q6AMT5"/>
<dbReference type="STRING" id="177439.DP1611"/>
<dbReference type="KEGG" id="dps:DP1611"/>
<dbReference type="eggNOG" id="COG1469">
    <property type="taxonomic scope" value="Bacteria"/>
</dbReference>
<dbReference type="HOGENOM" id="CLU_062816_1_1_7"/>
<dbReference type="OrthoDB" id="9774824at2"/>
<dbReference type="UniPathway" id="UPA00848">
    <property type="reaction ID" value="UER00151"/>
</dbReference>
<dbReference type="Proteomes" id="UP000000602">
    <property type="component" value="Chromosome"/>
</dbReference>
<dbReference type="GO" id="GO:0003934">
    <property type="term" value="F:GTP cyclohydrolase I activity"/>
    <property type="evidence" value="ECO:0007669"/>
    <property type="project" value="UniProtKB-UniRule"/>
</dbReference>
<dbReference type="GO" id="GO:0046654">
    <property type="term" value="P:tetrahydrofolate biosynthetic process"/>
    <property type="evidence" value="ECO:0007669"/>
    <property type="project" value="UniProtKB-UniRule"/>
</dbReference>
<dbReference type="Gene3D" id="3.10.270.10">
    <property type="entry name" value="Urate Oxidase"/>
    <property type="match status" value="1"/>
</dbReference>
<dbReference type="HAMAP" id="MF_01527_B">
    <property type="entry name" value="GTP_cyclohydrol_B"/>
    <property type="match status" value="1"/>
</dbReference>
<dbReference type="InterPro" id="IPR022838">
    <property type="entry name" value="GTP_cyclohydrolase_FolE2"/>
</dbReference>
<dbReference type="InterPro" id="IPR003801">
    <property type="entry name" value="GTP_cyclohydrolase_FolE2/MptA"/>
</dbReference>
<dbReference type="NCBIfam" id="NF010200">
    <property type="entry name" value="PRK13674.1-1"/>
    <property type="match status" value="1"/>
</dbReference>
<dbReference type="PANTHER" id="PTHR36445">
    <property type="entry name" value="GTP CYCLOHYDROLASE MPTA"/>
    <property type="match status" value="1"/>
</dbReference>
<dbReference type="PANTHER" id="PTHR36445:SF1">
    <property type="entry name" value="GTP CYCLOHYDROLASE MPTA"/>
    <property type="match status" value="1"/>
</dbReference>
<dbReference type="Pfam" id="PF02649">
    <property type="entry name" value="GCHY-1"/>
    <property type="match status" value="1"/>
</dbReference>
<name>GCH4_DESPS</name>
<comment type="function">
    <text evidence="1">Converts GTP to 7,8-dihydroneopterin triphosphate.</text>
</comment>
<comment type="catalytic activity">
    <reaction evidence="1">
        <text>GTP + H2O = 7,8-dihydroneopterin 3'-triphosphate + formate + H(+)</text>
        <dbReference type="Rhea" id="RHEA:17473"/>
        <dbReference type="ChEBI" id="CHEBI:15377"/>
        <dbReference type="ChEBI" id="CHEBI:15378"/>
        <dbReference type="ChEBI" id="CHEBI:15740"/>
        <dbReference type="ChEBI" id="CHEBI:37565"/>
        <dbReference type="ChEBI" id="CHEBI:58462"/>
        <dbReference type="EC" id="3.5.4.16"/>
    </reaction>
</comment>
<comment type="pathway">
    <text evidence="1">Cofactor biosynthesis; 7,8-dihydroneopterin triphosphate biosynthesis; 7,8-dihydroneopterin triphosphate from GTP: step 1/1.</text>
</comment>
<comment type="similarity">
    <text evidence="1">Belongs to the GTP cyclohydrolase IV family.</text>
</comment>
<feature type="chain" id="PRO_0000147708" description="GTP cyclohydrolase FolE2">
    <location>
        <begin position="1"/>
        <end position="251"/>
    </location>
</feature>
<feature type="site" description="May be catalytically important" evidence="1">
    <location>
        <position position="137"/>
    </location>
</feature>
<sequence>MSKKQSTICQKVGIADLEIPIILGQKDGKLQHSIASCKITATIKETLKGDISGEVQRLLPSFTKEIEPKSWHRLLEEFKENIGVEKITLSLSCPFFVSKKAPVSELRGLMEYNCTFSASTGESGITTSLYVPVTTLCPCSKEISDGGAHNQRAEAIFRVEMKEHLWLEDLIQLVEESASCQVYSVLKRPDEKYVTEKAFDNPMFVEDVVRKIAVRAGEHPLIHAFSISVESFESIHKHNAYAYVNSEDLNL</sequence>
<gene>
    <name evidence="1" type="primary">folE2</name>
    <name type="ordered locus">DP1611</name>
</gene>
<keyword id="KW-0378">Hydrolase</keyword>
<keyword id="KW-1185">Reference proteome</keyword>
<reference key="1">
    <citation type="journal article" date="2004" name="Environ. Microbiol.">
        <title>The genome of Desulfotalea psychrophila, a sulfate-reducing bacterium from permanently cold Arctic sediments.</title>
        <authorList>
            <person name="Rabus R."/>
            <person name="Ruepp A."/>
            <person name="Frickey T."/>
            <person name="Rattei T."/>
            <person name="Fartmann B."/>
            <person name="Stark M."/>
            <person name="Bauer M."/>
            <person name="Zibat A."/>
            <person name="Lombardot T."/>
            <person name="Becker I."/>
            <person name="Amann J."/>
            <person name="Gellner K."/>
            <person name="Teeling H."/>
            <person name="Leuschner W.D."/>
            <person name="Gloeckner F.-O."/>
            <person name="Lupas A.N."/>
            <person name="Amann R."/>
            <person name="Klenk H.-P."/>
        </authorList>
    </citation>
    <scope>NUCLEOTIDE SEQUENCE [LARGE SCALE GENOMIC DNA]</scope>
    <source>
        <strain>DSM 12343 / LSv54</strain>
    </source>
</reference>
<evidence type="ECO:0000255" key="1">
    <source>
        <dbReference type="HAMAP-Rule" id="MF_01527"/>
    </source>
</evidence>
<organism>
    <name type="scientific">Desulfotalea psychrophila (strain LSv54 / DSM 12343)</name>
    <dbReference type="NCBI Taxonomy" id="177439"/>
    <lineage>
        <taxon>Bacteria</taxon>
        <taxon>Pseudomonadati</taxon>
        <taxon>Thermodesulfobacteriota</taxon>
        <taxon>Desulfobulbia</taxon>
        <taxon>Desulfobulbales</taxon>
        <taxon>Desulfocapsaceae</taxon>
        <taxon>Desulfotalea</taxon>
    </lineage>
</organism>